<comment type="similarity">
    <text evidence="1">Belongs to the selenium-binding protein family.</text>
</comment>
<gene>
    <name evidence="2" type="primary">semi-1</name>
    <name evidence="2" type="ORF">R11G10.2</name>
</gene>
<sequence length="542" mass="62237">MSGLNIYFILQICSHTDTYFFIYSLSITLFFFSKYKMGVCISHEYSKPNAEQAEILQDFSKFMKPEERPPMAVEHQMYDYRLVEEEQDDELFAIVCCPHSIGYERDKIALVDLDPTSETFCTILSEVHLTSNGDEPGRMNWAKSAESLGEMNKFVRRNIIVPCMNSGKIYVIAFENEKLWIEKEIRNDELIRKDVSCPYAVRSLPLKGAPVHVSTLGDRFGNGKGDFILIDRRTWEVRKKSEPTFSDYGGDFSLQPRHNLMISSEWGHPRLLRDGFMPSELENVSESFGARLHVWQISPPKLIQSINLDTCDGSLVICVKFLHNADCNHAFAISAIGSSIFHLHMNTLTKEWAADRVAHVPLLKVENWQSDEMPALLTDMIISMDDRWLYVCGFLHGVLWRFDIQDPFRVSLHGKINLGGIFDSFPEVRIKTSNAMEDRWWLPPETRSLPRGTKFRGGPALMQLSKDGCRLYVCNSFYKAWDAQFYPELISDGGQMIRVDIVDDEMQLNEKFLIDMKGQPNGPFVIRDIKFLDGDCTSDSFL</sequence>
<protein>
    <recommendedName>
        <fullName>Putative selenium-binding protein</fullName>
    </recommendedName>
</protein>
<keyword id="KW-1185">Reference proteome</keyword>
<keyword id="KW-0711">Selenium</keyword>
<accession>Q21950</accession>
<feature type="chain" id="PRO_0000174637" description="Putative selenium-binding protein">
    <location>
        <begin position="1"/>
        <end position="542"/>
    </location>
</feature>
<organism>
    <name type="scientific">Caenorhabditis elegans</name>
    <dbReference type="NCBI Taxonomy" id="6239"/>
    <lineage>
        <taxon>Eukaryota</taxon>
        <taxon>Metazoa</taxon>
        <taxon>Ecdysozoa</taxon>
        <taxon>Nematoda</taxon>
        <taxon>Chromadorea</taxon>
        <taxon>Rhabditida</taxon>
        <taxon>Rhabditina</taxon>
        <taxon>Rhabditomorpha</taxon>
        <taxon>Rhabditoidea</taxon>
        <taxon>Rhabditidae</taxon>
        <taxon>Peloderinae</taxon>
        <taxon>Caenorhabditis</taxon>
    </lineage>
</organism>
<dbReference type="EMBL" id="Z77668">
    <property type="protein sequence ID" value="CAB01239.2"/>
    <property type="molecule type" value="Genomic_DNA"/>
</dbReference>
<dbReference type="PIR" id="T24193">
    <property type="entry name" value="T24193"/>
</dbReference>
<dbReference type="RefSeq" id="NP_506351.3">
    <property type="nucleotide sequence ID" value="NM_073950.3"/>
</dbReference>
<dbReference type="SMR" id="Q21950"/>
<dbReference type="PaxDb" id="6239-R11G10.2"/>
<dbReference type="EnsemblMetazoa" id="R11G10.2.1">
    <property type="protein sequence ID" value="R11G10.2.1"/>
    <property type="gene ID" value="WBGene00011249"/>
</dbReference>
<dbReference type="GeneID" id="187819"/>
<dbReference type="KEGG" id="cel:CELE_R11G10.2"/>
<dbReference type="UCSC" id="R11G10.2">
    <property type="organism name" value="c. elegans"/>
</dbReference>
<dbReference type="AGR" id="WB:WBGene00011249"/>
<dbReference type="CTD" id="187819"/>
<dbReference type="WormBase" id="R11G10.2">
    <property type="protein sequence ID" value="CE51824"/>
    <property type="gene ID" value="WBGene00011249"/>
    <property type="gene designation" value="semi-1"/>
</dbReference>
<dbReference type="eggNOG" id="KOG0918">
    <property type="taxonomic scope" value="Eukaryota"/>
</dbReference>
<dbReference type="GeneTree" id="ENSGT00390000014244"/>
<dbReference type="HOGENOM" id="CLU_032512_2_0_1"/>
<dbReference type="InParanoid" id="Q21950"/>
<dbReference type="OMA" id="EWGHPRL"/>
<dbReference type="OrthoDB" id="10252446at2759"/>
<dbReference type="PhylomeDB" id="Q21950"/>
<dbReference type="PRO" id="PR:Q21950"/>
<dbReference type="Proteomes" id="UP000001940">
    <property type="component" value="Chromosome V"/>
</dbReference>
<dbReference type="GO" id="GO:0008430">
    <property type="term" value="F:selenium binding"/>
    <property type="evidence" value="ECO:0007669"/>
    <property type="project" value="InterPro"/>
</dbReference>
<dbReference type="InterPro" id="IPR008826">
    <property type="entry name" value="Se-bd"/>
</dbReference>
<dbReference type="PANTHER" id="PTHR23300">
    <property type="entry name" value="METHANETHIOL OXIDASE"/>
    <property type="match status" value="1"/>
</dbReference>
<dbReference type="PANTHER" id="PTHR23300:SF3">
    <property type="entry name" value="SELENIUM-BINDING PROTEIN-RELATED"/>
    <property type="match status" value="1"/>
</dbReference>
<dbReference type="Pfam" id="PF05694">
    <property type="entry name" value="SBP56"/>
    <property type="match status" value="1"/>
</dbReference>
<dbReference type="SUPFAM" id="SSF75011">
    <property type="entry name" value="3-carboxy-cis,cis-mucoante lactonizing enzyme"/>
    <property type="match status" value="1"/>
</dbReference>
<reference key="1">
    <citation type="journal article" date="1998" name="Science">
        <title>Genome sequence of the nematode C. elegans: a platform for investigating biology.</title>
        <authorList>
            <consortium name="The C. elegans sequencing consortium"/>
        </authorList>
    </citation>
    <scope>NUCLEOTIDE SEQUENCE [LARGE SCALE GENOMIC DNA]</scope>
    <source>
        <strain>Bristol N2</strain>
    </source>
</reference>
<proteinExistence type="inferred from homology"/>
<evidence type="ECO:0000305" key="1"/>
<evidence type="ECO:0000312" key="2">
    <source>
        <dbReference type="WormBase" id="R11G10.2"/>
    </source>
</evidence>
<name>SBP_CAEEL</name>